<feature type="chain" id="PRO_0000341882" description="2-succinyl-5-enolpyruvyl-6-hydroxy-3-cyclohexene-1-carboxylate synthase">
    <location>
        <begin position="1"/>
        <end position="570"/>
    </location>
</feature>
<reference key="1">
    <citation type="journal article" date="2000" name="Nature">
        <title>DNA sequence of both chromosomes of the cholera pathogen Vibrio cholerae.</title>
        <authorList>
            <person name="Heidelberg J.F."/>
            <person name="Eisen J.A."/>
            <person name="Nelson W.C."/>
            <person name="Clayton R.A."/>
            <person name="Gwinn M.L."/>
            <person name="Dodson R.J."/>
            <person name="Haft D.H."/>
            <person name="Hickey E.K."/>
            <person name="Peterson J.D."/>
            <person name="Umayam L.A."/>
            <person name="Gill S.R."/>
            <person name="Nelson K.E."/>
            <person name="Read T.D."/>
            <person name="Tettelin H."/>
            <person name="Richardson D.L."/>
            <person name="Ermolaeva M.D."/>
            <person name="Vamathevan J.J."/>
            <person name="Bass S."/>
            <person name="Qin H."/>
            <person name="Dragoi I."/>
            <person name="Sellers P."/>
            <person name="McDonald L.A."/>
            <person name="Utterback T.R."/>
            <person name="Fleischmann R.D."/>
            <person name="Nierman W.C."/>
            <person name="White O."/>
            <person name="Salzberg S.L."/>
            <person name="Smith H.O."/>
            <person name="Colwell R.R."/>
            <person name="Mekalanos J.J."/>
            <person name="Venter J.C."/>
            <person name="Fraser C.M."/>
        </authorList>
    </citation>
    <scope>NUCLEOTIDE SEQUENCE [LARGE SCALE GENOMIC DNA]</scope>
    <source>
        <strain>ATCC 39315 / El Tor Inaba N16961</strain>
    </source>
</reference>
<keyword id="KW-0460">Magnesium</keyword>
<keyword id="KW-0464">Manganese</keyword>
<keyword id="KW-0474">Menaquinone biosynthesis</keyword>
<keyword id="KW-0479">Metal-binding</keyword>
<keyword id="KW-1185">Reference proteome</keyword>
<keyword id="KW-0786">Thiamine pyrophosphate</keyword>
<keyword id="KW-0808">Transferase</keyword>
<evidence type="ECO:0000255" key="1">
    <source>
        <dbReference type="HAMAP-Rule" id="MF_01659"/>
    </source>
</evidence>
<sequence length="570" mass="62295">MNRDQALLNRLWSRVLLEELSRLGVTQVCVAPGSRSTPLTLEANANTAFTLHTHYDERGLGFMALGLAKASQQPVAVIVTSGTAVANLLPAIAESKLTGERLVVLTADRPLELVGCGANQAIVQSGIFSSHVTASLELPSPAIHHPLSWLLTSIDEVMARQALLGGSVHINCPFPEPLYSAGDEAIYQPYLQPVQRWREQARPYTQVHQGLVQSVPAAIDGLLTKGVVIVGSLSLQEAQAAKRFAKAMGWPLLCDPQSGISSQWAHFDLWLQHPKAREQLNQAQCVVQFGSRIVSKRLLQWLEAWCATGLGEYHYIAPHSARNNPWHAMQQQWVCEISHWVDAVLSKRLAGQHTQQGWADELTHYAQSVRQLAQLHFSSSSLSEVALALDLTERATQADLFLGNSLIVRLVDIFSALDGREVFSNRGASGIDGLVATASGVQRARQKPLLMLLGDTSLLYDLNSLALMRNPAQPTVIVVTNNDGGAIFDLLPVPSEQREALYQMPHGMDFAHAASQFGLAYCAAQTLEHYQTLVEEHFAHGAGTLLIEVKTPPQQASMHIKQLTSQLHAL</sequence>
<accession>Q9KQM3</accession>
<protein>
    <recommendedName>
        <fullName evidence="1">2-succinyl-5-enolpyruvyl-6-hydroxy-3-cyclohexene-1-carboxylate synthase</fullName>
        <shortName evidence="1">SEPHCHC synthase</shortName>
        <ecNumber evidence="1">2.2.1.9</ecNumber>
    </recommendedName>
    <alternativeName>
        <fullName evidence="1">Menaquinone biosynthesis protein MenD</fullName>
    </alternativeName>
</protein>
<proteinExistence type="inferred from homology"/>
<comment type="function">
    <text evidence="1">Catalyzes the thiamine diphosphate-dependent decarboxylation of 2-oxoglutarate and the subsequent addition of the resulting succinic semialdehyde-thiamine pyrophosphate anion to isochorismate to yield 2-succinyl-5-enolpyruvyl-6-hydroxy-3-cyclohexene-1-carboxylate (SEPHCHC).</text>
</comment>
<comment type="catalytic activity">
    <reaction evidence="1">
        <text>isochorismate + 2-oxoglutarate + H(+) = 5-enolpyruvoyl-6-hydroxy-2-succinyl-cyclohex-3-ene-1-carboxylate + CO2</text>
        <dbReference type="Rhea" id="RHEA:25593"/>
        <dbReference type="ChEBI" id="CHEBI:15378"/>
        <dbReference type="ChEBI" id="CHEBI:16526"/>
        <dbReference type="ChEBI" id="CHEBI:16810"/>
        <dbReference type="ChEBI" id="CHEBI:29780"/>
        <dbReference type="ChEBI" id="CHEBI:58818"/>
        <dbReference type="EC" id="2.2.1.9"/>
    </reaction>
</comment>
<comment type="cofactor">
    <cofactor evidence="1">
        <name>Mg(2+)</name>
        <dbReference type="ChEBI" id="CHEBI:18420"/>
    </cofactor>
    <cofactor evidence="1">
        <name>Mn(2+)</name>
        <dbReference type="ChEBI" id="CHEBI:29035"/>
    </cofactor>
</comment>
<comment type="cofactor">
    <cofactor evidence="1">
        <name>thiamine diphosphate</name>
        <dbReference type="ChEBI" id="CHEBI:58937"/>
    </cofactor>
    <text evidence="1">Binds 1 thiamine pyrophosphate per subunit.</text>
</comment>
<comment type="pathway">
    <text evidence="1">Quinol/quinone metabolism; 1,4-dihydroxy-2-naphthoate biosynthesis; 1,4-dihydroxy-2-naphthoate from chorismate: step 2/7.</text>
</comment>
<comment type="pathway">
    <text evidence="1">Quinol/quinone metabolism; menaquinone biosynthesis.</text>
</comment>
<comment type="subunit">
    <text evidence="1">Homodimer.</text>
</comment>
<comment type="similarity">
    <text evidence="1">Belongs to the TPP enzyme family. MenD subfamily.</text>
</comment>
<dbReference type="EC" id="2.2.1.9" evidence="1"/>
<dbReference type="EMBL" id="AE003852">
    <property type="protein sequence ID" value="AAF95123.1"/>
    <property type="molecule type" value="Genomic_DNA"/>
</dbReference>
<dbReference type="PIR" id="A82135">
    <property type="entry name" value="A82135"/>
</dbReference>
<dbReference type="RefSeq" id="NP_231609.1">
    <property type="nucleotide sequence ID" value="NC_002505.1"/>
</dbReference>
<dbReference type="RefSeq" id="WP_001078087.1">
    <property type="nucleotide sequence ID" value="NZ_LT906614.1"/>
</dbReference>
<dbReference type="SMR" id="Q9KQM3"/>
<dbReference type="STRING" id="243277.VC_1975"/>
<dbReference type="DNASU" id="2613479"/>
<dbReference type="EnsemblBacteria" id="AAF95123">
    <property type="protein sequence ID" value="AAF95123"/>
    <property type="gene ID" value="VC_1975"/>
</dbReference>
<dbReference type="KEGG" id="vch:VC_1975"/>
<dbReference type="PATRIC" id="fig|243277.26.peg.1887"/>
<dbReference type="eggNOG" id="COG1165">
    <property type="taxonomic scope" value="Bacteria"/>
</dbReference>
<dbReference type="HOGENOM" id="CLU_006051_3_0_6"/>
<dbReference type="UniPathway" id="UPA00079"/>
<dbReference type="UniPathway" id="UPA01057">
    <property type="reaction ID" value="UER00164"/>
</dbReference>
<dbReference type="Proteomes" id="UP000000584">
    <property type="component" value="Chromosome 1"/>
</dbReference>
<dbReference type="GO" id="GO:0070204">
    <property type="term" value="F:2-succinyl-5-enolpyruvyl-6-hydroxy-3-cyclohexene-1-carboxylic-acid synthase activity"/>
    <property type="evidence" value="ECO:0007669"/>
    <property type="project" value="UniProtKB-UniRule"/>
</dbReference>
<dbReference type="GO" id="GO:0000287">
    <property type="term" value="F:magnesium ion binding"/>
    <property type="evidence" value="ECO:0007669"/>
    <property type="project" value="UniProtKB-UniRule"/>
</dbReference>
<dbReference type="GO" id="GO:0030145">
    <property type="term" value="F:manganese ion binding"/>
    <property type="evidence" value="ECO:0007669"/>
    <property type="project" value="UniProtKB-UniRule"/>
</dbReference>
<dbReference type="GO" id="GO:0030976">
    <property type="term" value="F:thiamine pyrophosphate binding"/>
    <property type="evidence" value="ECO:0007669"/>
    <property type="project" value="UniProtKB-UniRule"/>
</dbReference>
<dbReference type="GO" id="GO:0009234">
    <property type="term" value="P:menaquinone biosynthetic process"/>
    <property type="evidence" value="ECO:0007669"/>
    <property type="project" value="UniProtKB-UniRule"/>
</dbReference>
<dbReference type="CDD" id="cd07037">
    <property type="entry name" value="TPP_PYR_MenD"/>
    <property type="match status" value="1"/>
</dbReference>
<dbReference type="CDD" id="cd02009">
    <property type="entry name" value="TPP_SHCHC_synthase"/>
    <property type="match status" value="1"/>
</dbReference>
<dbReference type="FunFam" id="3.40.50.970:FF:000103">
    <property type="entry name" value="2-succinyl-5-enolpyruvyl-6-hydroxy-3-cyclohexene-1-carboxylate synthase"/>
    <property type="match status" value="1"/>
</dbReference>
<dbReference type="Gene3D" id="3.40.50.970">
    <property type="match status" value="2"/>
</dbReference>
<dbReference type="Gene3D" id="3.40.50.1220">
    <property type="entry name" value="TPP-binding domain"/>
    <property type="match status" value="1"/>
</dbReference>
<dbReference type="HAMAP" id="MF_01659">
    <property type="entry name" value="MenD"/>
    <property type="match status" value="1"/>
</dbReference>
<dbReference type="InterPro" id="IPR004433">
    <property type="entry name" value="MenaQ_synth_MenD"/>
</dbReference>
<dbReference type="InterPro" id="IPR032264">
    <property type="entry name" value="MenD_middle"/>
</dbReference>
<dbReference type="InterPro" id="IPR029061">
    <property type="entry name" value="THDP-binding"/>
</dbReference>
<dbReference type="InterPro" id="IPR012001">
    <property type="entry name" value="Thiamin_PyroP_enz_TPP-bd_dom"/>
</dbReference>
<dbReference type="InterPro" id="IPR011766">
    <property type="entry name" value="TPP_enzyme_TPP-bd"/>
</dbReference>
<dbReference type="NCBIfam" id="TIGR00173">
    <property type="entry name" value="menD"/>
    <property type="match status" value="1"/>
</dbReference>
<dbReference type="PANTHER" id="PTHR42916">
    <property type="entry name" value="2-SUCCINYL-5-ENOLPYRUVYL-6-HYDROXY-3-CYCLOHEXENE-1-CARBOXYLATE SYNTHASE"/>
    <property type="match status" value="1"/>
</dbReference>
<dbReference type="PANTHER" id="PTHR42916:SF1">
    <property type="entry name" value="PROTEIN PHYLLO, CHLOROPLASTIC"/>
    <property type="match status" value="1"/>
</dbReference>
<dbReference type="Pfam" id="PF02775">
    <property type="entry name" value="TPP_enzyme_C"/>
    <property type="match status" value="1"/>
</dbReference>
<dbReference type="Pfam" id="PF16582">
    <property type="entry name" value="TPP_enzyme_M_2"/>
    <property type="match status" value="1"/>
</dbReference>
<dbReference type="Pfam" id="PF02776">
    <property type="entry name" value="TPP_enzyme_N"/>
    <property type="match status" value="1"/>
</dbReference>
<dbReference type="PIRSF" id="PIRSF004983">
    <property type="entry name" value="MenD"/>
    <property type="match status" value="1"/>
</dbReference>
<dbReference type="SUPFAM" id="SSF52518">
    <property type="entry name" value="Thiamin diphosphate-binding fold (THDP-binding)"/>
    <property type="match status" value="2"/>
</dbReference>
<name>MEND_VIBCH</name>
<gene>
    <name evidence="1" type="primary">menD</name>
    <name type="ordered locus">VC_1975</name>
</gene>
<organism>
    <name type="scientific">Vibrio cholerae serotype O1 (strain ATCC 39315 / El Tor Inaba N16961)</name>
    <dbReference type="NCBI Taxonomy" id="243277"/>
    <lineage>
        <taxon>Bacteria</taxon>
        <taxon>Pseudomonadati</taxon>
        <taxon>Pseudomonadota</taxon>
        <taxon>Gammaproteobacteria</taxon>
        <taxon>Vibrionales</taxon>
        <taxon>Vibrionaceae</taxon>
        <taxon>Vibrio</taxon>
    </lineage>
</organism>